<keyword id="KW-0002">3D-structure</keyword>
<keyword id="KW-0010">Activator</keyword>
<keyword id="KW-0025">Alternative splicing</keyword>
<keyword id="KW-0898">Cataract</keyword>
<keyword id="KW-0991">Intellectual disability</keyword>
<keyword id="KW-0488">Methylation</keyword>
<keyword id="KW-0539">Nucleus</keyword>
<keyword id="KW-0597">Phosphoprotein</keyword>
<keyword id="KW-1267">Proteomics identification</keyword>
<keyword id="KW-1185">Reference proteome</keyword>
<keyword id="KW-0804">Transcription</keyword>
<keyword id="KW-0805">Transcription regulation</keyword>
<feature type="chain" id="PRO_0000079361" description="Mediator of RNA polymerase II transcription subunit 27">
    <location>
        <begin position="1"/>
        <end position="311"/>
    </location>
</feature>
<feature type="modified residue" description="Phosphoserine" evidence="15">
    <location>
        <position position="132"/>
    </location>
</feature>
<feature type="modified residue" description="N6-methyllysine" evidence="16">
    <location>
        <position position="134"/>
    </location>
</feature>
<feature type="splice variant" id="VSP_055411" description="In isoform 3." evidence="8">
    <original>LQYHAGLASGLLNQ</original>
    <variation>KEQLSIPRIFHWKV</variation>
    <location>
        <begin position="117"/>
        <end position="130"/>
    </location>
</feature>
<feature type="splice variant" id="VSP_055412" description="In isoform 3." evidence="8">
    <location>
        <begin position="131"/>
        <end position="311"/>
    </location>
</feature>
<feature type="splice variant" id="VSP_051869" description="In isoform 2." evidence="6 7 9">
    <location>
        <begin position="192"/>
        <end position="227"/>
    </location>
</feature>
<feature type="sequence variant" id="VAR_085606" description="In NEDSCAC; uncertain significance; dbSNP:rs774752053." evidence="4">
    <original>V</original>
    <variation>G</variation>
    <location>
        <position position="63"/>
    </location>
</feature>
<feature type="sequence variant" id="VAR_085607" description="In NEDSCAC; uncertain significance; dbSNP:rs1056298725." evidence="4">
    <original>S</original>
    <variation>F</variation>
    <location>
        <position position="232"/>
    </location>
</feature>
<feature type="sequence variant" id="VAR_085608" description="In NEDSCAC; uncertain significance; dbSNP:rs1589166413." evidence="4">
    <original>V</original>
    <variation>A</variation>
    <location>
        <position position="242"/>
    </location>
</feature>
<feature type="sequence variant" id="VAR_085609" description="In NEDSCAC; uncertain significance; dbSNP:rs1838678412." evidence="4">
    <original>P</original>
    <variation>L</variation>
    <location>
        <position position="259"/>
    </location>
</feature>
<feature type="sequence variant" id="VAR_085610" description="In NEDSCAC; uncertain significance; dbSNP:rs778593272." evidence="4">
    <original>P</original>
    <variation>L</variation>
    <location>
        <position position="280"/>
    </location>
</feature>
<feature type="sequence variant" id="VAR_085611" description="In NEDSCAC; uncertain significance; dbSNP:rs774276967." evidence="4">
    <original>G</original>
    <variation>S</variation>
    <location>
        <position position="291"/>
    </location>
</feature>
<feature type="sequence variant" id="VAR_085612" description="In NEDSCAC; uncertain significance; dbSNP:rs1218659650." evidence="4">
    <original>P</original>
    <variation>L</variation>
    <location>
        <position position="293"/>
    </location>
</feature>
<feature type="sequence conflict" description="In Ref. 6; AAZ13763." evidence="10" ref="6">
    <original>N</original>
    <variation>D</variation>
    <location>
        <position position="64"/>
    </location>
</feature>
<feature type="sequence conflict" description="In Ref. 6; AAZ13763." evidence="10" ref="6">
    <original>K</original>
    <variation>E</variation>
    <location>
        <position position="79"/>
    </location>
</feature>
<feature type="sequence conflict" description="In Ref. 4; AAD12721." evidence="10" ref="4">
    <original>L</original>
    <variation>S</variation>
    <location>
        <position position="94"/>
    </location>
</feature>
<feature type="sequence conflict" description="In Ref. 4; AAD12721." evidence="10" ref="4">
    <original>L</original>
    <variation>C</variation>
    <location>
        <position position="207"/>
    </location>
</feature>
<feature type="sequence conflict" description="In Ref. 6; AAZ13763." evidence="10" ref="6">
    <original>N</original>
    <variation>D</variation>
    <location>
        <position position="235"/>
    </location>
</feature>
<feature type="sequence conflict" description="In Ref. 4; AAD12721." evidence="10" ref="4">
    <original>A</original>
    <variation>G</variation>
    <location>
        <position position="279"/>
    </location>
</feature>
<feature type="helix" evidence="17">
    <location>
        <begin position="8"/>
        <end position="37"/>
    </location>
</feature>
<feature type="helix" evidence="17">
    <location>
        <begin position="45"/>
        <end position="76"/>
    </location>
</feature>
<feature type="helix" evidence="17">
    <location>
        <begin position="104"/>
        <end position="130"/>
    </location>
</feature>
<feature type="helix" evidence="17">
    <location>
        <begin position="159"/>
        <end position="171"/>
    </location>
</feature>
<feature type="strand" evidence="17">
    <location>
        <begin position="176"/>
        <end position="181"/>
    </location>
</feature>
<feature type="strand" evidence="17">
    <location>
        <begin position="189"/>
        <end position="194"/>
    </location>
</feature>
<feature type="turn" evidence="17">
    <location>
        <begin position="195"/>
        <end position="197"/>
    </location>
</feature>
<feature type="strand" evidence="17">
    <location>
        <begin position="198"/>
        <end position="219"/>
    </location>
</feature>
<feature type="strand" evidence="17">
    <location>
        <begin position="226"/>
        <end position="228"/>
    </location>
</feature>
<feature type="helix" evidence="17">
    <location>
        <begin position="237"/>
        <end position="252"/>
    </location>
</feature>
<feature type="helix" evidence="17">
    <location>
        <begin position="260"/>
        <end position="271"/>
    </location>
</feature>
<feature type="helix" evidence="17">
    <location>
        <begin position="272"/>
        <end position="275"/>
    </location>
</feature>
<feature type="turn" evidence="17">
    <location>
        <begin position="276"/>
        <end position="278"/>
    </location>
</feature>
<feature type="turn" evidence="17">
    <location>
        <begin position="282"/>
        <end position="284"/>
    </location>
</feature>
<feature type="strand" evidence="17">
    <location>
        <begin position="289"/>
        <end position="291"/>
    </location>
</feature>
<feature type="helix" evidence="17">
    <location>
        <begin position="307"/>
        <end position="309"/>
    </location>
</feature>
<accession>Q6P2C8</accession>
<accession>O95401</accession>
<accession>Q4F964</accession>
<accession>Q5VTA4</accession>
<accession>Q5VTA5</accession>
<accession>Q9BU57</accession>
<accession>Q9NYR4</accession>
<accession>V9GYV9</accession>
<proteinExistence type="evidence at protein level"/>
<evidence type="ECO:0000269" key="1">
    <source>
    </source>
</evidence>
<evidence type="ECO:0000269" key="2">
    <source>
    </source>
</evidence>
<evidence type="ECO:0000269" key="3">
    <source>
    </source>
</evidence>
<evidence type="ECO:0000269" key="4">
    <source>
    </source>
</evidence>
<evidence type="ECO:0000269" key="5">
    <source>
    </source>
</evidence>
<evidence type="ECO:0000303" key="6">
    <source>
    </source>
</evidence>
<evidence type="ECO:0000303" key="7">
    <source>
    </source>
</evidence>
<evidence type="ECO:0000303" key="8">
    <source>
    </source>
</evidence>
<evidence type="ECO:0000303" key="9">
    <source ref="6"/>
</evidence>
<evidence type="ECO:0000305" key="10"/>
<evidence type="ECO:0000312" key="11">
    <source>
        <dbReference type="EMBL" id="AAD12721.1"/>
    </source>
</evidence>
<evidence type="ECO:0000312" key="12">
    <source>
        <dbReference type="EMBL" id="AAF37290.1"/>
    </source>
</evidence>
<evidence type="ECO:0000312" key="13">
    <source>
        <dbReference type="EMBL" id="AAH02878.1"/>
    </source>
</evidence>
<evidence type="ECO:0000312" key="14">
    <source>
        <dbReference type="EMBL" id="AAH64608.1"/>
    </source>
</evidence>
<evidence type="ECO:0007744" key="15">
    <source>
    </source>
</evidence>
<evidence type="ECO:0007744" key="16">
    <source>
    </source>
</evidence>
<evidence type="ECO:0007829" key="17">
    <source>
        <dbReference type="PDB" id="7EMF"/>
    </source>
</evidence>
<name>MED27_HUMAN</name>
<reference key="1">
    <citation type="journal article" date="1996" name="Genome Res.">
        <title>Normalization and subtraction: two approaches to facilitate gene discovery.</title>
        <authorList>
            <person name="Bonaldo M.F."/>
            <person name="Lennon G."/>
            <person name="Soares M.B."/>
        </authorList>
    </citation>
    <scope>NUCLEOTIDE SEQUENCE [LARGE SCALE MRNA] (ISOFORM 3)</scope>
</reference>
<reference evidence="10" key="2">
    <citation type="journal article" date="2004" name="Nature">
        <title>DNA sequence and analysis of human chromosome 9.</title>
        <authorList>
            <person name="Humphray S.J."/>
            <person name="Oliver K."/>
            <person name="Hunt A.R."/>
            <person name="Plumb R.W."/>
            <person name="Loveland J.E."/>
            <person name="Howe K.L."/>
            <person name="Andrews T.D."/>
            <person name="Searle S."/>
            <person name="Hunt S.E."/>
            <person name="Scott C.E."/>
            <person name="Jones M.C."/>
            <person name="Ainscough R."/>
            <person name="Almeida J.P."/>
            <person name="Ambrose K.D."/>
            <person name="Ashwell R.I.S."/>
            <person name="Babbage A.K."/>
            <person name="Babbage S."/>
            <person name="Bagguley C.L."/>
            <person name="Bailey J."/>
            <person name="Banerjee R."/>
            <person name="Barker D.J."/>
            <person name="Barlow K.F."/>
            <person name="Bates K."/>
            <person name="Beasley H."/>
            <person name="Beasley O."/>
            <person name="Bird C.P."/>
            <person name="Bray-Allen S."/>
            <person name="Brown A.J."/>
            <person name="Brown J.Y."/>
            <person name="Burford D."/>
            <person name="Burrill W."/>
            <person name="Burton J."/>
            <person name="Carder C."/>
            <person name="Carter N.P."/>
            <person name="Chapman J.C."/>
            <person name="Chen Y."/>
            <person name="Clarke G."/>
            <person name="Clark S.Y."/>
            <person name="Clee C.M."/>
            <person name="Clegg S."/>
            <person name="Collier R.E."/>
            <person name="Corby N."/>
            <person name="Crosier M."/>
            <person name="Cummings A.T."/>
            <person name="Davies J."/>
            <person name="Dhami P."/>
            <person name="Dunn M."/>
            <person name="Dutta I."/>
            <person name="Dyer L.W."/>
            <person name="Earthrowl M.E."/>
            <person name="Faulkner L."/>
            <person name="Fleming C.J."/>
            <person name="Frankish A."/>
            <person name="Frankland J.A."/>
            <person name="French L."/>
            <person name="Fricker D.G."/>
            <person name="Garner P."/>
            <person name="Garnett J."/>
            <person name="Ghori J."/>
            <person name="Gilbert J.G.R."/>
            <person name="Glison C."/>
            <person name="Grafham D.V."/>
            <person name="Gribble S."/>
            <person name="Griffiths C."/>
            <person name="Griffiths-Jones S."/>
            <person name="Grocock R."/>
            <person name="Guy J."/>
            <person name="Hall R.E."/>
            <person name="Hammond S."/>
            <person name="Harley J.L."/>
            <person name="Harrison E.S.I."/>
            <person name="Hart E.A."/>
            <person name="Heath P.D."/>
            <person name="Henderson C.D."/>
            <person name="Hopkins B.L."/>
            <person name="Howard P.J."/>
            <person name="Howden P.J."/>
            <person name="Huckle E."/>
            <person name="Johnson C."/>
            <person name="Johnson D."/>
            <person name="Joy A.A."/>
            <person name="Kay M."/>
            <person name="Keenan S."/>
            <person name="Kershaw J.K."/>
            <person name="Kimberley A.M."/>
            <person name="King A."/>
            <person name="Knights A."/>
            <person name="Laird G.K."/>
            <person name="Langford C."/>
            <person name="Lawlor S."/>
            <person name="Leongamornlert D.A."/>
            <person name="Leversha M."/>
            <person name="Lloyd C."/>
            <person name="Lloyd D.M."/>
            <person name="Lovell J."/>
            <person name="Martin S."/>
            <person name="Mashreghi-Mohammadi M."/>
            <person name="Matthews L."/>
            <person name="McLaren S."/>
            <person name="McLay K.E."/>
            <person name="McMurray A."/>
            <person name="Milne S."/>
            <person name="Nickerson T."/>
            <person name="Nisbett J."/>
            <person name="Nordsiek G."/>
            <person name="Pearce A.V."/>
            <person name="Peck A.I."/>
            <person name="Porter K.M."/>
            <person name="Pandian R."/>
            <person name="Pelan S."/>
            <person name="Phillimore B."/>
            <person name="Povey S."/>
            <person name="Ramsey Y."/>
            <person name="Rand V."/>
            <person name="Scharfe M."/>
            <person name="Sehra H.K."/>
            <person name="Shownkeen R."/>
            <person name="Sims S.K."/>
            <person name="Skuce C.D."/>
            <person name="Smith M."/>
            <person name="Steward C.A."/>
            <person name="Swarbreck D."/>
            <person name="Sycamore N."/>
            <person name="Tester J."/>
            <person name="Thorpe A."/>
            <person name="Tracey A."/>
            <person name="Tromans A."/>
            <person name="Thomas D.W."/>
            <person name="Wall M."/>
            <person name="Wallis J.M."/>
            <person name="West A.P."/>
            <person name="Whitehead S.L."/>
            <person name="Willey D.L."/>
            <person name="Williams S.A."/>
            <person name="Wilming L."/>
            <person name="Wray P.W."/>
            <person name="Young L."/>
            <person name="Ashurst J.L."/>
            <person name="Coulson A."/>
            <person name="Blocker H."/>
            <person name="Durbin R.M."/>
            <person name="Sulston J.E."/>
            <person name="Hubbard T."/>
            <person name="Jackson M.J."/>
            <person name="Bentley D.R."/>
            <person name="Beck S."/>
            <person name="Rogers J."/>
            <person name="Dunham I."/>
        </authorList>
    </citation>
    <scope>NUCLEOTIDE SEQUENCE [LARGE SCALE GENOMIC DNA]</scope>
</reference>
<reference evidence="10 14" key="3">
    <citation type="journal article" date="2004" name="Genome Res.">
        <title>The status, quality, and expansion of the NIH full-length cDNA project: the Mammalian Gene Collection (MGC).</title>
        <authorList>
            <consortium name="The MGC Project Team"/>
        </authorList>
    </citation>
    <scope>NUCLEOTIDE SEQUENCE [LARGE SCALE MRNA] (ISOFORMS 1 AND 2)</scope>
    <source>
        <tissue evidence="13">Lung</tissue>
        <tissue evidence="14">Skin</tissue>
    </source>
</reference>
<reference evidence="10 11" key="4">
    <citation type="journal article" date="1999" name="Nature">
        <title>The transcriptional cofactor complex CRSP is required for activity of the enhancer-binding protein Sp1.</title>
        <authorList>
            <person name="Ryu S."/>
            <person name="Zhou S."/>
            <person name="Ladurner A.G."/>
            <person name="Tjian R."/>
        </authorList>
    </citation>
    <scope>NUCLEOTIDE SEQUENCE [MRNA] OF 39-311 (ISOFORM 1)</scope>
    <scope>FUNCTION</scope>
    <scope>IDENTIFICATION IN CRSP COMPLEX</scope>
    <scope>SUBCELLULAR LOCATION</scope>
</reference>
<reference evidence="10 12" key="5">
    <citation type="journal article" date="2000" name="Mol. Cell">
        <title>The USA-derived transcriptional coactivator PC2 is a submodule of TRAP/SMCC and acts synergistically with other PCs.</title>
        <authorList>
            <person name="Malik S."/>
            <person name="Gu W."/>
            <person name="Wu W."/>
            <person name="Qin J."/>
            <person name="Roeder R.G."/>
        </authorList>
    </citation>
    <scope>NUCLEOTIDE SEQUENCE [MRNA] OF 39-311 (ISOFORM 1)</scope>
    <scope>FUNCTION</scope>
    <scope>IDENTIFICATION IN CRSP COMPLEX</scope>
    <scope>SUBCELLULAR LOCATION</scope>
</reference>
<reference key="6">
    <citation type="submission" date="2005-06" db="EMBL/GenBank/DDBJ databases">
        <authorList>
            <person name="Lin L."/>
            <person name="Nong W."/>
            <person name="Zhou G."/>
            <person name="Ke R."/>
            <person name="Shen C."/>
            <person name="Zhong G."/>
            <person name="Zheng Z."/>
            <person name="Liang M."/>
            <person name="Huang B."/>
            <person name="Li H."/>
            <person name="Yang S."/>
        </authorList>
    </citation>
    <scope>NUCLEOTIDE SEQUENCE [LARGE SCALE MRNA] OF 39-311 (ISOFORM 2)</scope>
</reference>
<reference key="7">
    <citation type="journal article" date="2004" name="Mol. Cell">
        <title>A set of consensus mammalian mediator subunits identified by multidimensional protein identification technology.</title>
        <authorList>
            <person name="Sato S."/>
            <person name="Tomomori-Sato C."/>
            <person name="Parmely T.J."/>
            <person name="Florens L."/>
            <person name="Zybailov B."/>
            <person name="Swanson S.K."/>
            <person name="Banks C.A.S."/>
            <person name="Jin J."/>
            <person name="Cai Y."/>
            <person name="Washburn M.P."/>
            <person name="Conaway J.W."/>
            <person name="Conaway R.C."/>
        </authorList>
    </citation>
    <scope>IDENTIFICATION BY MASS SPECTROMETRY</scope>
    <scope>IDENTIFICATION IN THE MEDIATOR COMPLEX</scope>
</reference>
<reference key="8">
    <citation type="journal article" date="2005" name="Mol. Cell">
        <title>MED1/TRAP220 exists predominantly in a TRAP/Mediator subpopulation enriched in RNA polymerase II and is required for ER-mediated transcription.</title>
        <authorList>
            <person name="Zhang X."/>
            <person name="Krutchinsky A."/>
            <person name="Fukuda A."/>
            <person name="Chen W."/>
            <person name="Yamamura S."/>
            <person name="Chait B.T."/>
            <person name="Roeder R.G."/>
        </authorList>
    </citation>
    <scope>IDENTIFICATION BY MASS SPECTROMETRY</scope>
    <scope>IDENTIFICATION IN THE MEDIATOR COMPLEX</scope>
    <scope>ASSOCIATION OF THE MEDIATOR COMPLEX WITH RNA POLYMERASE II</scope>
</reference>
<reference key="9">
    <citation type="journal article" date="2011" name="BMC Syst. Biol.">
        <title>Initial characterization of the human central proteome.</title>
        <authorList>
            <person name="Burkard T.R."/>
            <person name="Planyavsky M."/>
            <person name="Kaupe I."/>
            <person name="Breitwieser F.P."/>
            <person name="Buerckstuemmer T."/>
            <person name="Bennett K.L."/>
            <person name="Superti-Furga G."/>
            <person name="Colinge J."/>
        </authorList>
    </citation>
    <scope>IDENTIFICATION BY MASS SPECTROMETRY [LARGE SCALE ANALYSIS]</scope>
</reference>
<reference key="10">
    <citation type="journal article" date="2013" name="J. Proteome Res.">
        <title>Toward a comprehensive characterization of a human cancer cell phosphoproteome.</title>
        <authorList>
            <person name="Zhou H."/>
            <person name="Di Palma S."/>
            <person name="Preisinger C."/>
            <person name="Peng M."/>
            <person name="Polat A.N."/>
            <person name="Heck A.J."/>
            <person name="Mohammed S."/>
        </authorList>
    </citation>
    <scope>PHOSPHORYLATION [LARGE SCALE ANALYSIS] AT SER-132</scope>
    <scope>IDENTIFICATION BY MASS SPECTROMETRY [LARGE SCALE ANALYSIS]</scope>
    <source>
        <tissue>Erythroleukemia</tissue>
    </source>
</reference>
<reference key="11">
    <citation type="journal article" date="2014" name="Mol. Cell. Proteomics">
        <title>Immunoaffinity enrichment and mass spectrometry analysis of protein methylation.</title>
        <authorList>
            <person name="Guo A."/>
            <person name="Gu H."/>
            <person name="Zhou J."/>
            <person name="Mulhern D."/>
            <person name="Wang Y."/>
            <person name="Lee K.A."/>
            <person name="Yang V."/>
            <person name="Aguiar M."/>
            <person name="Kornhauser J."/>
            <person name="Jia X."/>
            <person name="Ren J."/>
            <person name="Beausoleil S.A."/>
            <person name="Silva J.C."/>
            <person name="Vemulapalli V."/>
            <person name="Bedford M.T."/>
            <person name="Comb M.J."/>
        </authorList>
    </citation>
    <scope>METHYLATION [LARGE SCALE ANALYSIS] AT LYS-134</scope>
    <scope>IDENTIFICATION BY MASS SPECTROMETRY [LARGE SCALE ANALYSIS]</scope>
    <source>
        <tissue>Colon carcinoma</tissue>
    </source>
</reference>
<reference key="12">
    <citation type="journal article" date="2021" name="Ann. Neurol.">
        <title>MED27 variants cause developmental delay, dystonia, and cerebellar hypoplasia.</title>
        <authorList>
            <person name="Meng L."/>
            <person name="Isohanni P."/>
            <person name="Shao Y."/>
            <person name="Graham B.H."/>
            <person name="Hickey S.E."/>
            <person name="Brooks S."/>
            <person name="Suomalainen A."/>
            <person name="Joset P."/>
            <person name="Steindl K."/>
            <person name="Rauch A."/>
            <person name="Hackenberg A."/>
            <person name="High F.A."/>
            <person name="Armstrong-Javors A."/>
            <person name="Mencacci N.E."/>
            <person name="Gonzalez-Latapi P."/>
            <person name="Kamel W.A."/>
            <person name="Al-Hashel J.Y."/>
            <person name="Bustos B.I."/>
            <person name="Hernandez A.V."/>
            <person name="Krainc D."/>
            <person name="Lubbe S.J."/>
            <person name="Van Esch H."/>
            <person name="De Luca C."/>
            <person name="Ballon K."/>
            <person name="Ravelli C."/>
            <person name="Burglen L."/>
            <person name="Qebibo L."/>
            <person name="Calame D.G."/>
            <person name="Mitani T."/>
            <person name="Marafi D."/>
            <person name="Pehlivan D."/>
            <person name="Saadi N.W."/>
            <person name="Sahin Y."/>
            <person name="Maroofian R."/>
            <person name="Efthymiou S."/>
            <person name="Houlden H."/>
            <person name="Maqbool S."/>
            <person name="Rahman F."/>
            <person name="Gu S."/>
            <person name="Posey J.E."/>
            <person name="Lupski J.R."/>
            <person name="Hunter J.V."/>
            <person name="Wangler M.F."/>
            <person name="Carroll C.J."/>
            <person name="Yang Y."/>
        </authorList>
    </citation>
    <scope>INVOLVEMENT IN NEDSCAC</scope>
    <scope>VARIANTS NEDSCAC GLY-63; PHE-232; ALA-242; LEU-259; LEU-280; SER-291 AND LEU-293</scope>
</reference>
<comment type="function">
    <text evidence="1 5">Component of the Mediator complex, a coactivator involved in the regulated transcription of nearly all RNA polymerase II-dependent genes. Mediator functions as a bridge to convey information from gene-specific regulatory proteins to the basal RNA polymerase II transcription machinery. Mediator is recruited to promoters by direct interactions with regulatory proteins and serves as a scaffold for the assembly of a functional preinitiation complex with RNA polymerase II and the general transcription factors.</text>
</comment>
<comment type="subunit">
    <text evidence="1 2 3 5">Component of the Mediator complex, which is composed of MED1, MED4, MED6, MED7, MED8, MED9, MED10, MED11, MED12, MED13, MED13L, MED14, MED15, MED16, MED17, MED18, MED19, MED20, MED21, MED22, MED23, MED24, MED25, MED26, MED27, MED29, MED30, MED31, CCNC, CDK8 and CDC2L6/CDK11. The MED12, MED13, CCNC and CDK8 subunits form a distinct module termed the CDK8 module. Mediator containing the CDK8 module is less active than Mediator lacking this module in supporting transcriptional activation. Individual preparations of the Mediator complex lacking one or more distinct subunits have been variously termed ARC, CRSP, DRIP, PC2, SMCC and TRAP.</text>
</comment>
<comment type="interaction">
    <interactant intactId="EBI-394603">
        <id>Q6P2C8</id>
    </interactant>
    <interactant intactId="EBI-394562">
        <id>Q9NVC6</id>
        <label>MED17</label>
    </interactant>
    <organismsDiffer>false</organismsDiffer>
    <experiments>7</experiments>
</comment>
<comment type="interaction">
    <interactant intactId="EBI-394603">
        <id>Q6P2C8</id>
    </interactant>
    <interactant intactId="EBI-394687">
        <id>Q15528</id>
        <label>MED22</label>
    </interactant>
    <organismsDiffer>false</organismsDiffer>
    <experiments>7</experiments>
</comment>
<comment type="interaction">
    <interactant intactId="EBI-394603">
        <id>Q6P2C8</id>
    </interactant>
    <interactant intactId="EBI-514199">
        <id>Q9H204</id>
        <label>MED28</label>
    </interactant>
    <organismsDiffer>false</organismsDiffer>
    <experiments>5</experiments>
</comment>
<comment type="interaction">
    <interactant intactId="EBI-394603">
        <id>Q6P2C8</id>
    </interactant>
    <interactant intactId="EBI-394624">
        <id>O75586</id>
        <label>MED6</label>
    </interactant>
    <organismsDiffer>false</organismsDiffer>
    <experiments>4</experiments>
</comment>
<comment type="interaction">
    <interactant intactId="EBI-394603">
        <id>Q6P2C8</id>
    </interactant>
    <interactant intactId="EBI-398698">
        <id>Q9R0X0</id>
        <label>Med20</label>
    </interactant>
    <organismsDiffer>true</organismsDiffer>
    <experiments>2</experiments>
</comment>
<comment type="interaction">
    <interactant intactId="EBI-394603">
        <id>Q6P2C8</id>
    </interactant>
    <interactant intactId="EBI-309220">
        <id>Q9CQI9</id>
        <label>Med30</label>
    </interactant>
    <organismsDiffer>true</organismsDiffer>
    <experiments>2</experiments>
</comment>
<comment type="interaction">
    <interactant intactId="EBI-394603">
        <id>Q6P2C8</id>
    </interactant>
    <interactant intactId="EBI-7990252">
        <id>Q9D7W5</id>
        <label>Med8</label>
    </interactant>
    <organismsDiffer>true</organismsDiffer>
    <experiments>2</experiments>
</comment>
<comment type="subcellular location">
    <subcellularLocation>
        <location evidence="1 5">Nucleus</location>
    </subcellularLocation>
</comment>
<comment type="alternative products">
    <event type="alternative splicing"/>
    <isoform>
        <id>Q6P2C8-1</id>
        <name evidence="1 5 6 10">1</name>
        <sequence type="displayed"/>
    </isoform>
    <isoform>
        <id>Q6P2C8-2</id>
        <name evidence="6">2</name>
        <sequence type="described" ref="VSP_051869"/>
    </isoform>
    <isoform>
        <id>Q6P2C8-4</id>
        <name>3</name>
        <sequence type="described" ref="VSP_055411 VSP_055412"/>
    </isoform>
</comment>
<comment type="disease" evidence="4">
    <disease id="DI-06070">
        <name>Neurodevelopmental disorder with spasticity, cataracts, and cerebellar hypoplasia</name>
        <acronym>NEDSCAC</acronym>
        <description>An autosomal recessive disorder characterized by global developmental delay, impaired intellectual development, and poor or absent speech. More severely affected individuals do not achieve independent ambulation, whereas others develop some speech and can walk, or show regression later in childhood. Additional features include axial hypotonia, peripheral spasticity, dystonia, cataracts, and seizures. Brain imaging usually shows cerebellar hypoplasia, thin corpus callosum, cerebral atrophy, and hypomyelination.</description>
        <dbReference type="MIM" id="619286"/>
    </disease>
    <text>The disease may be caused by variants affecting the gene represented in this entry.</text>
</comment>
<comment type="similarity">
    <text evidence="10">Belongs to the Mediator complex subunit 27 family.</text>
</comment>
<comment type="sequence caution" evidence="10">
    <conflict type="erroneous initiation">
        <sequence resource="EMBL-CDS" id="AAH02878"/>
    </conflict>
    <text>Extended N-terminus.</text>
</comment>
<comment type="sequence caution" evidence="10">
    <conflict type="erroneous termination">
        <sequence resource="EMBL-CDS" id="AAH02878"/>
    </conflict>
    <text>Truncated C-terminus.</text>
</comment>
<dbReference type="EMBL" id="BQ189678">
    <property type="status" value="NOT_ANNOTATED_CDS"/>
    <property type="molecule type" value="Genomic_DNA"/>
</dbReference>
<dbReference type="EMBL" id="AL603649">
    <property type="status" value="NOT_ANNOTATED_CDS"/>
    <property type="molecule type" value="Genomic_DNA"/>
</dbReference>
<dbReference type="EMBL" id="AL513102">
    <property type="status" value="NOT_ANNOTATED_CDS"/>
    <property type="molecule type" value="Genomic_DNA"/>
</dbReference>
<dbReference type="EMBL" id="AL160271">
    <property type="status" value="NOT_ANNOTATED_CDS"/>
    <property type="molecule type" value="Genomic_DNA"/>
</dbReference>
<dbReference type="EMBL" id="AL713892">
    <property type="status" value="NOT_ANNOTATED_CDS"/>
    <property type="molecule type" value="Genomic_DNA"/>
</dbReference>
<dbReference type="EMBL" id="BC002878">
    <property type="protein sequence ID" value="AAH02878.1"/>
    <property type="status" value="ALT_SEQ"/>
    <property type="molecule type" value="mRNA"/>
</dbReference>
<dbReference type="EMBL" id="BC064608">
    <property type="protein sequence ID" value="AAH64608.1"/>
    <property type="molecule type" value="mRNA"/>
</dbReference>
<dbReference type="EMBL" id="AF104252">
    <property type="protein sequence ID" value="AAD12721.1"/>
    <property type="molecule type" value="mRNA"/>
</dbReference>
<dbReference type="EMBL" id="AF230382">
    <property type="protein sequence ID" value="AAF37290.1"/>
    <property type="molecule type" value="mRNA"/>
</dbReference>
<dbReference type="EMBL" id="DQ099387">
    <property type="protein sequence ID" value="AAZ13763.1"/>
    <property type="molecule type" value="mRNA"/>
</dbReference>
<dbReference type="CCDS" id="CCDS59153.1">
    <molecule id="Q6P2C8-2"/>
</dbReference>
<dbReference type="CCDS" id="CCDS6945.1">
    <molecule id="Q6P2C8-1"/>
</dbReference>
<dbReference type="CCDS" id="CCDS69689.1">
    <molecule id="Q6P2C8-4"/>
</dbReference>
<dbReference type="RefSeq" id="NP_001240810.1">
    <molecule id="Q6P2C8-2"/>
    <property type="nucleotide sequence ID" value="NM_001253881.2"/>
</dbReference>
<dbReference type="RefSeq" id="NP_001240811.1">
    <molecule id="Q6P2C8-4"/>
    <property type="nucleotide sequence ID" value="NM_001253882.2"/>
</dbReference>
<dbReference type="RefSeq" id="NP_004260.2">
    <molecule id="Q6P2C8-1"/>
    <property type="nucleotide sequence ID" value="NM_004269.3"/>
</dbReference>
<dbReference type="PDB" id="7EMF">
    <property type="method" value="EM"/>
    <property type="resolution" value="3.50 A"/>
    <property type="chains" value="0=1-311"/>
</dbReference>
<dbReference type="PDB" id="7ENA">
    <property type="method" value="EM"/>
    <property type="resolution" value="4.07 A"/>
    <property type="chains" value="c=1-311"/>
</dbReference>
<dbReference type="PDB" id="7ENC">
    <property type="method" value="EM"/>
    <property type="resolution" value="4.13 A"/>
    <property type="chains" value="c=1-311"/>
</dbReference>
<dbReference type="PDB" id="7ENJ">
    <property type="method" value="EM"/>
    <property type="resolution" value="4.40 A"/>
    <property type="chains" value="0=1-311"/>
</dbReference>
<dbReference type="PDB" id="7LBM">
    <property type="method" value="EM"/>
    <property type="resolution" value="4.80 A"/>
    <property type="chains" value="n=1-311"/>
</dbReference>
<dbReference type="PDB" id="7NVR">
    <property type="method" value="EM"/>
    <property type="resolution" value="4.50 A"/>
    <property type="chains" value="p=1-311"/>
</dbReference>
<dbReference type="PDB" id="8GXQ">
    <property type="method" value="EM"/>
    <property type="resolution" value="5.04 A"/>
    <property type="chains" value="c=1-311"/>
</dbReference>
<dbReference type="PDB" id="8GXS">
    <property type="method" value="EM"/>
    <property type="resolution" value="4.16 A"/>
    <property type="chains" value="c=1-311"/>
</dbReference>
<dbReference type="PDB" id="8T9D">
    <property type="method" value="EM"/>
    <property type="resolution" value="4.66 A"/>
    <property type="chains" value="V=1-311"/>
</dbReference>
<dbReference type="PDB" id="8TQW">
    <property type="method" value="EM"/>
    <property type="resolution" value="8.20 A"/>
    <property type="chains" value="0=1-311"/>
</dbReference>
<dbReference type="PDB" id="8TRH">
    <property type="method" value="EM"/>
    <property type="resolution" value="3.70 A"/>
    <property type="chains" value="0=1-311"/>
</dbReference>
<dbReference type="PDBsum" id="7EMF"/>
<dbReference type="PDBsum" id="7ENA"/>
<dbReference type="PDBsum" id="7ENC"/>
<dbReference type="PDBsum" id="7ENJ"/>
<dbReference type="PDBsum" id="7LBM"/>
<dbReference type="PDBsum" id="7NVR"/>
<dbReference type="PDBsum" id="8GXQ"/>
<dbReference type="PDBsum" id="8GXS"/>
<dbReference type="PDBsum" id="8T9D"/>
<dbReference type="PDBsum" id="8TQW"/>
<dbReference type="PDBsum" id="8TRH"/>
<dbReference type="EMDB" id="EMD-12610"/>
<dbReference type="EMDB" id="EMD-23255"/>
<dbReference type="EMDB" id="EMD-31191"/>
<dbReference type="EMDB" id="EMD-31204"/>
<dbReference type="EMDB" id="EMD-31207"/>
<dbReference type="EMDB" id="EMD-31211"/>
<dbReference type="EMDB" id="EMD-34359"/>
<dbReference type="EMDB" id="EMD-34360"/>
<dbReference type="EMDB" id="EMD-41107"/>
<dbReference type="EMDB" id="EMD-41565"/>
<dbReference type="EMDB" id="EMD-41580"/>
<dbReference type="SMR" id="Q6P2C8"/>
<dbReference type="BioGRID" id="114832">
    <property type="interactions" value="104"/>
</dbReference>
<dbReference type="ComplexPortal" id="CPX-3227">
    <property type="entry name" value="Core mediator complex"/>
</dbReference>
<dbReference type="CORUM" id="Q6P2C8"/>
<dbReference type="DIP" id="DIP-31465N"/>
<dbReference type="FunCoup" id="Q6P2C8">
    <property type="interactions" value="3342"/>
</dbReference>
<dbReference type="IntAct" id="Q6P2C8">
    <property type="interactions" value="75"/>
</dbReference>
<dbReference type="MINT" id="Q6P2C8"/>
<dbReference type="STRING" id="9606.ENSP00000292035"/>
<dbReference type="GlyGen" id="Q6P2C8">
    <property type="glycosylation" value="1 site, 1 O-linked glycan (1 site)"/>
</dbReference>
<dbReference type="iPTMnet" id="Q6P2C8"/>
<dbReference type="PhosphoSitePlus" id="Q6P2C8"/>
<dbReference type="BioMuta" id="MED27"/>
<dbReference type="DMDM" id="74737195"/>
<dbReference type="jPOST" id="Q6P2C8"/>
<dbReference type="MassIVE" id="Q6P2C8"/>
<dbReference type="PaxDb" id="9606-ENSP00000292035"/>
<dbReference type="PeptideAtlas" id="Q6P2C8"/>
<dbReference type="ProteomicsDB" id="66886">
    <molecule id="Q6P2C8-1"/>
</dbReference>
<dbReference type="ProteomicsDB" id="66887">
    <molecule id="Q6P2C8-2"/>
</dbReference>
<dbReference type="Pumba" id="Q6P2C8"/>
<dbReference type="Antibodypedia" id="1810">
    <property type="antibodies" value="152 antibodies from 27 providers"/>
</dbReference>
<dbReference type="DNASU" id="9442"/>
<dbReference type="Ensembl" id="ENST00000292035.10">
    <molecule id="Q6P2C8-1"/>
    <property type="protein sequence ID" value="ENSP00000292035.5"/>
    <property type="gene ID" value="ENSG00000160563.14"/>
</dbReference>
<dbReference type="Ensembl" id="ENST00000357028.6">
    <molecule id="Q6P2C8-2"/>
    <property type="protein sequence ID" value="ENSP00000349530.3"/>
    <property type="gene ID" value="ENSG00000160563.14"/>
</dbReference>
<dbReference type="Ensembl" id="ENST00000474263.1">
    <molecule id="Q6P2C8-4"/>
    <property type="protein sequence ID" value="ENSP00000477136.1"/>
    <property type="gene ID" value="ENSG00000160563.14"/>
</dbReference>
<dbReference type="GeneID" id="9442"/>
<dbReference type="KEGG" id="hsa:9442"/>
<dbReference type="MANE-Select" id="ENST00000292035.10">
    <property type="protein sequence ID" value="ENSP00000292035.5"/>
    <property type="RefSeq nucleotide sequence ID" value="NM_004269.4"/>
    <property type="RefSeq protein sequence ID" value="NP_004260.2"/>
</dbReference>
<dbReference type="UCSC" id="uc004cbe.3">
    <molecule id="Q6P2C8-1"/>
    <property type="organism name" value="human"/>
</dbReference>
<dbReference type="AGR" id="HGNC:2377"/>
<dbReference type="CTD" id="9442"/>
<dbReference type="DisGeNET" id="9442"/>
<dbReference type="GeneCards" id="MED27"/>
<dbReference type="HGNC" id="HGNC:2377">
    <property type="gene designation" value="MED27"/>
</dbReference>
<dbReference type="HPA" id="ENSG00000160563">
    <property type="expression patterns" value="Low tissue specificity"/>
</dbReference>
<dbReference type="MalaCards" id="MED27"/>
<dbReference type="MIM" id="605044">
    <property type="type" value="gene"/>
</dbReference>
<dbReference type="MIM" id="619286">
    <property type="type" value="phenotype"/>
</dbReference>
<dbReference type="neXtProt" id="NX_Q6P2C8"/>
<dbReference type="OpenTargets" id="ENSG00000160563"/>
<dbReference type="Orphanet" id="528084">
    <property type="disease" value="Non-specific syndromic intellectual disability"/>
</dbReference>
<dbReference type="PharmGKB" id="PA162395634"/>
<dbReference type="VEuPathDB" id="HostDB:ENSG00000160563"/>
<dbReference type="eggNOG" id="ENOG502QS6H">
    <property type="taxonomic scope" value="Eukaryota"/>
</dbReference>
<dbReference type="GeneTree" id="ENSGT00390000012207"/>
<dbReference type="HOGENOM" id="CLU_056015_0_0_1"/>
<dbReference type="InParanoid" id="Q6P2C8"/>
<dbReference type="OMA" id="FHEDCRN"/>
<dbReference type="OrthoDB" id="1868004at2759"/>
<dbReference type="PAN-GO" id="Q6P2C8">
    <property type="GO annotations" value="3 GO annotations based on evolutionary models"/>
</dbReference>
<dbReference type="PhylomeDB" id="Q6P2C8"/>
<dbReference type="TreeFam" id="TF323728"/>
<dbReference type="PathwayCommons" id="Q6P2C8"/>
<dbReference type="Reactome" id="R-HSA-1989781">
    <property type="pathway name" value="PPARA activates gene expression"/>
</dbReference>
<dbReference type="Reactome" id="R-HSA-212436">
    <property type="pathway name" value="Generic Transcription Pathway"/>
</dbReference>
<dbReference type="Reactome" id="R-HSA-381340">
    <property type="pathway name" value="Transcriptional regulation of white adipocyte differentiation"/>
</dbReference>
<dbReference type="Reactome" id="R-HSA-9833110">
    <property type="pathway name" value="RSV-host interactions"/>
</dbReference>
<dbReference type="Reactome" id="R-HSA-9841922">
    <property type="pathway name" value="MLL4 and MLL3 complexes regulate expression of PPARG target genes in adipogenesis and hepatic steatosis"/>
</dbReference>
<dbReference type="SignaLink" id="Q6P2C8"/>
<dbReference type="SIGNOR" id="Q6P2C8"/>
<dbReference type="BioGRID-ORCS" id="9442">
    <property type="hits" value="527 hits in 1160 CRISPR screens"/>
</dbReference>
<dbReference type="ChiTaRS" id="MED27">
    <property type="organism name" value="human"/>
</dbReference>
<dbReference type="GeneWiki" id="MED27"/>
<dbReference type="GenomeRNAi" id="9442"/>
<dbReference type="Pharos" id="Q6P2C8">
    <property type="development level" value="Tbio"/>
</dbReference>
<dbReference type="PRO" id="PR:Q6P2C8"/>
<dbReference type="Proteomes" id="UP000005640">
    <property type="component" value="Chromosome 9"/>
</dbReference>
<dbReference type="RNAct" id="Q6P2C8">
    <property type="molecule type" value="protein"/>
</dbReference>
<dbReference type="Bgee" id="ENSG00000160563">
    <property type="expression patterns" value="Expressed in oocyte and 184 other cell types or tissues"/>
</dbReference>
<dbReference type="ExpressionAtlas" id="Q6P2C8">
    <property type="expression patterns" value="baseline and differential"/>
</dbReference>
<dbReference type="GO" id="GO:0070847">
    <property type="term" value="C:core mediator complex"/>
    <property type="evidence" value="ECO:0000353"/>
    <property type="project" value="ComplexPortal"/>
</dbReference>
<dbReference type="GO" id="GO:0005829">
    <property type="term" value="C:cytosol"/>
    <property type="evidence" value="ECO:0000314"/>
    <property type="project" value="HPA"/>
</dbReference>
<dbReference type="GO" id="GO:0016592">
    <property type="term" value="C:mediator complex"/>
    <property type="evidence" value="ECO:0000318"/>
    <property type="project" value="GO_Central"/>
</dbReference>
<dbReference type="GO" id="GO:0005730">
    <property type="term" value="C:nucleolus"/>
    <property type="evidence" value="ECO:0000314"/>
    <property type="project" value="HPA"/>
</dbReference>
<dbReference type="GO" id="GO:0005654">
    <property type="term" value="C:nucleoplasm"/>
    <property type="evidence" value="ECO:0000314"/>
    <property type="project" value="HPA"/>
</dbReference>
<dbReference type="GO" id="GO:0005634">
    <property type="term" value="C:nucleus"/>
    <property type="evidence" value="ECO:0000314"/>
    <property type="project" value="UniProtKB"/>
</dbReference>
<dbReference type="GO" id="GO:0005667">
    <property type="term" value="C:transcription regulator complex"/>
    <property type="evidence" value="ECO:0000314"/>
    <property type="project" value="MGI"/>
</dbReference>
<dbReference type="GO" id="GO:0000151">
    <property type="term" value="C:ubiquitin ligase complex"/>
    <property type="evidence" value="ECO:0007669"/>
    <property type="project" value="Ensembl"/>
</dbReference>
<dbReference type="GO" id="GO:0003713">
    <property type="term" value="F:transcription coactivator activity"/>
    <property type="evidence" value="ECO:0000314"/>
    <property type="project" value="UniProtKB"/>
</dbReference>
<dbReference type="GO" id="GO:0061630">
    <property type="term" value="F:ubiquitin protein ligase activity"/>
    <property type="evidence" value="ECO:0007669"/>
    <property type="project" value="Ensembl"/>
</dbReference>
<dbReference type="GO" id="GO:0032968">
    <property type="term" value="P:positive regulation of transcription elongation by RNA polymerase II"/>
    <property type="evidence" value="ECO:0000303"/>
    <property type="project" value="ComplexPortal"/>
</dbReference>
<dbReference type="GO" id="GO:0060261">
    <property type="term" value="P:positive regulation of transcription initiation by RNA polymerase II"/>
    <property type="evidence" value="ECO:0000303"/>
    <property type="project" value="ComplexPortal"/>
</dbReference>
<dbReference type="GO" id="GO:0016567">
    <property type="term" value="P:protein ubiquitination"/>
    <property type="evidence" value="ECO:0007669"/>
    <property type="project" value="Ensembl"/>
</dbReference>
<dbReference type="GO" id="GO:0006357">
    <property type="term" value="P:regulation of transcription by RNA polymerase II"/>
    <property type="evidence" value="ECO:0000314"/>
    <property type="project" value="MGI"/>
</dbReference>
<dbReference type="GO" id="GO:0051123">
    <property type="term" value="P:RNA polymerase II preinitiation complex assembly"/>
    <property type="evidence" value="ECO:0000303"/>
    <property type="project" value="ComplexPortal"/>
</dbReference>
<dbReference type="GO" id="GO:0035019">
    <property type="term" value="P:somatic stem cell population maintenance"/>
    <property type="evidence" value="ECO:0007669"/>
    <property type="project" value="Ensembl"/>
</dbReference>
<dbReference type="GO" id="GO:0006367">
    <property type="term" value="P:transcription initiation at RNA polymerase II promoter"/>
    <property type="evidence" value="ECO:0000304"/>
    <property type="project" value="ProtInc"/>
</dbReference>
<dbReference type="InterPro" id="IPR021627">
    <property type="entry name" value="Mediator_Med27"/>
</dbReference>
<dbReference type="PANTHER" id="PTHR13130">
    <property type="entry name" value="34 KDA TRANSCRIPTIONAL CO-ACTIVATOR-RELATED"/>
    <property type="match status" value="1"/>
</dbReference>
<dbReference type="PANTHER" id="PTHR13130:SF4">
    <property type="entry name" value="MEDIATOR OF RNA POLYMERASE II TRANSCRIPTION SUBUNIT 27"/>
    <property type="match status" value="1"/>
</dbReference>
<dbReference type="Pfam" id="PF11571">
    <property type="entry name" value="Med27"/>
    <property type="match status" value="1"/>
</dbReference>
<gene>
    <name type="primary">MED27</name>
    <name evidence="11" type="synonym">CRSP34</name>
    <name type="synonym">CRSP8</name>
</gene>
<sequence>MADVINVSVNLEAFSQAISAIQALRSSVSRVFDCLKDGMRNKETLEGREKAFIAHFQDNLHSVNRDLNELERLSNLVGKPSENHPLHNSGLLSLDPVQDKTPLYSQLLQAYKWSNKLQYHAGLASGLLNQQSLKRSANQMGVSAKRRPKAQPTTLVLPPQYVDDVISRIDRMFPEMSIHLSRPNGTSAMLLVTLGKVLKVIVVMRSLFIDRTIVKGYNENVYTEDGKLDIWSKSNYQVFQKVTDHATTALLHYQLPQMPDVVVRSFMTWLRSYIKLFQAPCQRCGKFLQDGLPPTWRDFRTLEAFHDTCRQ</sequence>
<protein>
    <recommendedName>
        <fullName>Mediator of RNA polymerase II transcription subunit 27</fullName>
    </recommendedName>
    <alternativeName>
        <fullName>Cofactor required for Sp1 transcriptional activation subunit 8</fullName>
        <shortName>CRSP complex subunit 8</shortName>
    </alternativeName>
    <alternativeName>
        <fullName>Mediator complex subunit 27</fullName>
    </alternativeName>
    <alternativeName>
        <fullName>P37 TRAP/SMCC/PC2 subunit</fullName>
    </alternativeName>
    <alternativeName>
        <fullName>Transcriptional coactivator CRSP34</fullName>
    </alternativeName>
</protein>
<organism>
    <name type="scientific">Homo sapiens</name>
    <name type="common">Human</name>
    <dbReference type="NCBI Taxonomy" id="9606"/>
    <lineage>
        <taxon>Eukaryota</taxon>
        <taxon>Metazoa</taxon>
        <taxon>Chordata</taxon>
        <taxon>Craniata</taxon>
        <taxon>Vertebrata</taxon>
        <taxon>Euteleostomi</taxon>
        <taxon>Mammalia</taxon>
        <taxon>Eutheria</taxon>
        <taxon>Euarchontoglires</taxon>
        <taxon>Primates</taxon>
        <taxon>Haplorrhini</taxon>
        <taxon>Catarrhini</taxon>
        <taxon>Hominidae</taxon>
        <taxon>Homo</taxon>
    </lineage>
</organism>